<reference key="1">
    <citation type="journal article" date="2005" name="Genome Res.">
        <title>Genome sequence of Blochmannia pennsylvanicus indicates parallel evolutionary trends among bacterial mutualists of insects.</title>
        <authorList>
            <person name="Degnan P.H."/>
            <person name="Lazarus A.B."/>
            <person name="Wernegreen J.J."/>
        </authorList>
    </citation>
    <scope>NUCLEOTIDE SEQUENCE [LARGE SCALE GENOMIC DNA]</scope>
    <source>
        <strain>BPEN</strain>
    </source>
</reference>
<keyword id="KW-0378">Hydrolase</keyword>
<keyword id="KW-0408">Iron</keyword>
<keyword id="KW-0479">Metal-binding</keyword>
<keyword id="KW-0648">Protein biosynthesis</keyword>
<keyword id="KW-1185">Reference proteome</keyword>
<dbReference type="EC" id="3.5.1.88" evidence="1"/>
<dbReference type="EMBL" id="CP000016">
    <property type="protein sequence ID" value="AAZ40859.1"/>
    <property type="molecule type" value="Genomic_DNA"/>
</dbReference>
<dbReference type="RefSeq" id="WP_011282766.1">
    <property type="nucleotide sequence ID" value="NC_007292.1"/>
</dbReference>
<dbReference type="SMR" id="Q493I1"/>
<dbReference type="STRING" id="291272.BPEN_226"/>
<dbReference type="KEGG" id="bpn:BPEN_226"/>
<dbReference type="eggNOG" id="COG0242">
    <property type="taxonomic scope" value="Bacteria"/>
</dbReference>
<dbReference type="HOGENOM" id="CLU_061901_2_1_6"/>
<dbReference type="OrthoDB" id="9804313at2"/>
<dbReference type="Proteomes" id="UP000007794">
    <property type="component" value="Chromosome"/>
</dbReference>
<dbReference type="GO" id="GO:0046872">
    <property type="term" value="F:metal ion binding"/>
    <property type="evidence" value="ECO:0007669"/>
    <property type="project" value="UniProtKB-KW"/>
</dbReference>
<dbReference type="GO" id="GO:0042586">
    <property type="term" value="F:peptide deformylase activity"/>
    <property type="evidence" value="ECO:0007669"/>
    <property type="project" value="UniProtKB-UniRule"/>
</dbReference>
<dbReference type="GO" id="GO:0043686">
    <property type="term" value="P:co-translational protein modification"/>
    <property type="evidence" value="ECO:0007669"/>
    <property type="project" value="TreeGrafter"/>
</dbReference>
<dbReference type="GO" id="GO:0006412">
    <property type="term" value="P:translation"/>
    <property type="evidence" value="ECO:0007669"/>
    <property type="project" value="UniProtKB-UniRule"/>
</dbReference>
<dbReference type="CDD" id="cd00487">
    <property type="entry name" value="Pep_deformylase"/>
    <property type="match status" value="1"/>
</dbReference>
<dbReference type="FunFam" id="3.90.45.10:FF:000001">
    <property type="entry name" value="Peptide deformylase"/>
    <property type="match status" value="1"/>
</dbReference>
<dbReference type="Gene3D" id="3.90.45.10">
    <property type="entry name" value="Peptide deformylase"/>
    <property type="match status" value="1"/>
</dbReference>
<dbReference type="HAMAP" id="MF_00163">
    <property type="entry name" value="Pep_deformylase"/>
    <property type="match status" value="1"/>
</dbReference>
<dbReference type="InterPro" id="IPR023635">
    <property type="entry name" value="Peptide_deformylase"/>
</dbReference>
<dbReference type="InterPro" id="IPR036821">
    <property type="entry name" value="Peptide_deformylase_sf"/>
</dbReference>
<dbReference type="NCBIfam" id="TIGR00079">
    <property type="entry name" value="pept_deformyl"/>
    <property type="match status" value="1"/>
</dbReference>
<dbReference type="NCBIfam" id="NF001159">
    <property type="entry name" value="PRK00150.1-3"/>
    <property type="match status" value="1"/>
</dbReference>
<dbReference type="PANTHER" id="PTHR10458">
    <property type="entry name" value="PEPTIDE DEFORMYLASE"/>
    <property type="match status" value="1"/>
</dbReference>
<dbReference type="PANTHER" id="PTHR10458:SF22">
    <property type="entry name" value="PEPTIDE DEFORMYLASE"/>
    <property type="match status" value="1"/>
</dbReference>
<dbReference type="Pfam" id="PF01327">
    <property type="entry name" value="Pep_deformylase"/>
    <property type="match status" value="1"/>
</dbReference>
<dbReference type="PIRSF" id="PIRSF004749">
    <property type="entry name" value="Pep_def"/>
    <property type="match status" value="1"/>
</dbReference>
<dbReference type="PRINTS" id="PR01576">
    <property type="entry name" value="PDEFORMYLASE"/>
</dbReference>
<dbReference type="SUPFAM" id="SSF56420">
    <property type="entry name" value="Peptide deformylase"/>
    <property type="match status" value="1"/>
</dbReference>
<protein>
    <recommendedName>
        <fullName evidence="1">Peptide deformylase</fullName>
        <shortName evidence="1">PDF</shortName>
        <ecNumber evidence="1">3.5.1.88</ecNumber>
    </recommendedName>
    <alternativeName>
        <fullName evidence="1">Polypeptide deformylase</fullName>
    </alternativeName>
</protein>
<evidence type="ECO:0000255" key="1">
    <source>
        <dbReference type="HAMAP-Rule" id="MF_00163"/>
    </source>
</evidence>
<organism>
    <name type="scientific">Blochmanniella pennsylvanica (strain BPEN)</name>
    <dbReference type="NCBI Taxonomy" id="291272"/>
    <lineage>
        <taxon>Bacteria</taxon>
        <taxon>Pseudomonadati</taxon>
        <taxon>Pseudomonadota</taxon>
        <taxon>Gammaproteobacteria</taxon>
        <taxon>Enterobacterales</taxon>
        <taxon>Enterobacteriaceae</taxon>
        <taxon>ant endosymbionts</taxon>
        <taxon>Candidatus Blochmanniella</taxon>
    </lineage>
</organism>
<sequence>MSILEILYYPDKRLRTIADPVVAVSDDTNQIINDMFDTMYFKKGIGLAATQVNIHQQIIVIDLYKKNKQRLVFINPSITKKTGIISIPESCLSIPQIYEIVPRSEKITIQSLDQYGNKFEMEANNLLAICIQHEVDHLFGKLFIDHLSPLKIKKIHKKIKKLSKTFKKNQFPL</sequence>
<gene>
    <name evidence="1" type="primary">def</name>
    <name type="ordered locus">BPEN_226</name>
</gene>
<accession>Q493I1</accession>
<comment type="function">
    <text evidence="1">Removes the formyl group from the N-terminal Met of newly synthesized proteins. Requires at least a dipeptide for an efficient rate of reaction. N-terminal L-methionine is a prerequisite for activity but the enzyme has broad specificity at other positions.</text>
</comment>
<comment type="catalytic activity">
    <reaction evidence="1">
        <text>N-terminal N-formyl-L-methionyl-[peptide] + H2O = N-terminal L-methionyl-[peptide] + formate</text>
        <dbReference type="Rhea" id="RHEA:24420"/>
        <dbReference type="Rhea" id="RHEA-COMP:10639"/>
        <dbReference type="Rhea" id="RHEA-COMP:10640"/>
        <dbReference type="ChEBI" id="CHEBI:15377"/>
        <dbReference type="ChEBI" id="CHEBI:15740"/>
        <dbReference type="ChEBI" id="CHEBI:49298"/>
        <dbReference type="ChEBI" id="CHEBI:64731"/>
        <dbReference type="EC" id="3.5.1.88"/>
    </reaction>
</comment>
<comment type="cofactor">
    <cofactor evidence="1">
        <name>Fe(2+)</name>
        <dbReference type="ChEBI" id="CHEBI:29033"/>
    </cofactor>
    <text evidence="1">Binds 1 Fe(2+) ion.</text>
</comment>
<comment type="similarity">
    <text evidence="1">Belongs to the polypeptide deformylase family.</text>
</comment>
<feature type="chain" id="PRO_0000301011" description="Peptide deformylase">
    <location>
        <begin position="1"/>
        <end position="173"/>
    </location>
</feature>
<feature type="active site" evidence="1">
    <location>
        <position position="134"/>
    </location>
</feature>
<feature type="binding site" evidence="1">
    <location>
        <position position="91"/>
    </location>
    <ligand>
        <name>Fe cation</name>
        <dbReference type="ChEBI" id="CHEBI:24875"/>
    </ligand>
</feature>
<feature type="binding site" evidence="1">
    <location>
        <position position="133"/>
    </location>
    <ligand>
        <name>Fe cation</name>
        <dbReference type="ChEBI" id="CHEBI:24875"/>
    </ligand>
</feature>
<feature type="binding site" evidence="1">
    <location>
        <position position="137"/>
    </location>
    <ligand>
        <name>Fe cation</name>
        <dbReference type="ChEBI" id="CHEBI:24875"/>
    </ligand>
</feature>
<name>DEF_BLOPB</name>
<proteinExistence type="inferred from homology"/>